<name>RUVA_CERS1</name>
<feature type="chain" id="PRO_1000002532" description="Holliday junction branch migration complex subunit RuvA">
    <location>
        <begin position="1"/>
        <end position="224"/>
    </location>
</feature>
<feature type="region of interest" description="Domain I" evidence="1">
    <location>
        <begin position="1"/>
        <end position="64"/>
    </location>
</feature>
<feature type="region of interest" description="Domain II" evidence="1">
    <location>
        <begin position="65"/>
        <end position="143"/>
    </location>
</feature>
<feature type="region of interest" description="Disordered" evidence="2">
    <location>
        <begin position="141"/>
        <end position="185"/>
    </location>
</feature>
<feature type="region of interest" description="Flexible linker" evidence="1">
    <location>
        <begin position="144"/>
        <end position="170"/>
    </location>
</feature>
<feature type="region of interest" description="Domain III" evidence="1">
    <location>
        <begin position="171"/>
        <end position="224"/>
    </location>
</feature>
<evidence type="ECO:0000255" key="1">
    <source>
        <dbReference type="HAMAP-Rule" id="MF_00031"/>
    </source>
</evidence>
<evidence type="ECO:0000256" key="2">
    <source>
        <dbReference type="SAM" id="MobiDB-lite"/>
    </source>
</evidence>
<reference key="1">
    <citation type="submission" date="2007-02" db="EMBL/GenBank/DDBJ databases">
        <title>Complete sequence of chromosome 1 of Rhodobacter sphaeroides ATCC 17029.</title>
        <authorList>
            <person name="Copeland A."/>
            <person name="Lucas S."/>
            <person name="Lapidus A."/>
            <person name="Barry K."/>
            <person name="Detter J.C."/>
            <person name="Glavina del Rio T."/>
            <person name="Hammon N."/>
            <person name="Israni S."/>
            <person name="Dalin E."/>
            <person name="Tice H."/>
            <person name="Pitluck S."/>
            <person name="Kiss H."/>
            <person name="Brettin T."/>
            <person name="Bruce D."/>
            <person name="Han C."/>
            <person name="Tapia R."/>
            <person name="Gilna P."/>
            <person name="Schmutz J."/>
            <person name="Larimer F."/>
            <person name="Land M."/>
            <person name="Hauser L."/>
            <person name="Kyrpides N."/>
            <person name="Mikhailova N."/>
            <person name="Richardson P."/>
            <person name="Mackenzie C."/>
            <person name="Choudhary M."/>
            <person name="Donohue T.J."/>
            <person name="Kaplan S."/>
        </authorList>
    </citation>
    <scope>NUCLEOTIDE SEQUENCE [LARGE SCALE GENOMIC DNA]</scope>
    <source>
        <strain>ATCC 17029 / ATH 2.4.9</strain>
    </source>
</reference>
<proteinExistence type="inferred from homology"/>
<comment type="function">
    <text evidence="1">The RuvA-RuvB-RuvC complex processes Holliday junction (HJ) DNA during genetic recombination and DNA repair, while the RuvA-RuvB complex plays an important role in the rescue of blocked DNA replication forks via replication fork reversal (RFR). RuvA specifically binds to HJ cruciform DNA, conferring on it an open structure. The RuvB hexamer acts as an ATP-dependent pump, pulling dsDNA into and through the RuvAB complex. HJ branch migration allows RuvC to scan DNA until it finds its consensus sequence, where it cleaves and resolves the cruciform DNA.</text>
</comment>
<comment type="subunit">
    <text evidence="1">Homotetramer. Forms an RuvA(8)-RuvB(12)-Holliday junction (HJ) complex. HJ DNA is sandwiched between 2 RuvA tetramers; dsDNA enters through RuvA and exits via RuvB. An RuvB hexamer assembles on each DNA strand where it exits the tetramer. Each RuvB hexamer is contacted by two RuvA subunits (via domain III) on 2 adjacent RuvB subunits; this complex drives branch migration. In the full resolvosome a probable DNA-RuvA(4)-RuvB(12)-RuvC(2) complex forms which resolves the HJ.</text>
</comment>
<comment type="subcellular location">
    <subcellularLocation>
        <location evidence="1">Cytoplasm</location>
    </subcellularLocation>
</comment>
<comment type="domain">
    <text evidence="1">Has three domains with a flexible linker between the domains II and III and assumes an 'L' shape. Domain III is highly mobile and contacts RuvB.</text>
</comment>
<comment type="similarity">
    <text evidence="1">Belongs to the RuvA family.</text>
</comment>
<accession>A3PLU4</accession>
<protein>
    <recommendedName>
        <fullName evidence="1">Holliday junction branch migration complex subunit RuvA</fullName>
    </recommendedName>
</protein>
<organism>
    <name type="scientific">Cereibacter sphaeroides (strain ATCC 17029 / ATH 2.4.9)</name>
    <name type="common">Rhodobacter sphaeroides</name>
    <dbReference type="NCBI Taxonomy" id="349101"/>
    <lineage>
        <taxon>Bacteria</taxon>
        <taxon>Pseudomonadati</taxon>
        <taxon>Pseudomonadota</taxon>
        <taxon>Alphaproteobacteria</taxon>
        <taxon>Rhodobacterales</taxon>
        <taxon>Paracoccaceae</taxon>
        <taxon>Cereibacter</taxon>
    </lineage>
</organism>
<keyword id="KW-0963">Cytoplasm</keyword>
<keyword id="KW-0227">DNA damage</keyword>
<keyword id="KW-0233">DNA recombination</keyword>
<keyword id="KW-0234">DNA repair</keyword>
<keyword id="KW-0238">DNA-binding</keyword>
<gene>
    <name evidence="1" type="primary">ruvA</name>
    <name type="ordered locus">Rsph17029_2207</name>
</gene>
<dbReference type="EMBL" id="CP000577">
    <property type="protein sequence ID" value="ABN77310.1"/>
    <property type="molecule type" value="Genomic_DNA"/>
</dbReference>
<dbReference type="RefSeq" id="WP_011338315.1">
    <property type="nucleotide sequence ID" value="NC_009049.1"/>
</dbReference>
<dbReference type="SMR" id="A3PLU4"/>
<dbReference type="GeneID" id="3717948"/>
<dbReference type="KEGG" id="rsh:Rsph17029_2207"/>
<dbReference type="HOGENOM" id="CLU_087936_3_0_5"/>
<dbReference type="GO" id="GO:0005737">
    <property type="term" value="C:cytoplasm"/>
    <property type="evidence" value="ECO:0007669"/>
    <property type="project" value="UniProtKB-SubCell"/>
</dbReference>
<dbReference type="GO" id="GO:0009379">
    <property type="term" value="C:Holliday junction helicase complex"/>
    <property type="evidence" value="ECO:0007669"/>
    <property type="project" value="InterPro"/>
</dbReference>
<dbReference type="GO" id="GO:0048476">
    <property type="term" value="C:Holliday junction resolvase complex"/>
    <property type="evidence" value="ECO:0007669"/>
    <property type="project" value="UniProtKB-UniRule"/>
</dbReference>
<dbReference type="GO" id="GO:0005524">
    <property type="term" value="F:ATP binding"/>
    <property type="evidence" value="ECO:0007669"/>
    <property type="project" value="InterPro"/>
</dbReference>
<dbReference type="GO" id="GO:0000400">
    <property type="term" value="F:four-way junction DNA binding"/>
    <property type="evidence" value="ECO:0007669"/>
    <property type="project" value="UniProtKB-UniRule"/>
</dbReference>
<dbReference type="GO" id="GO:0009378">
    <property type="term" value="F:four-way junction helicase activity"/>
    <property type="evidence" value="ECO:0007669"/>
    <property type="project" value="InterPro"/>
</dbReference>
<dbReference type="GO" id="GO:0006310">
    <property type="term" value="P:DNA recombination"/>
    <property type="evidence" value="ECO:0007669"/>
    <property type="project" value="UniProtKB-UniRule"/>
</dbReference>
<dbReference type="GO" id="GO:0006281">
    <property type="term" value="P:DNA repair"/>
    <property type="evidence" value="ECO:0007669"/>
    <property type="project" value="UniProtKB-UniRule"/>
</dbReference>
<dbReference type="CDD" id="cd14332">
    <property type="entry name" value="UBA_RuvA_C"/>
    <property type="match status" value="1"/>
</dbReference>
<dbReference type="Gene3D" id="1.10.150.20">
    <property type="entry name" value="5' to 3' exonuclease, C-terminal subdomain"/>
    <property type="match status" value="1"/>
</dbReference>
<dbReference type="Gene3D" id="1.10.8.10">
    <property type="entry name" value="DNA helicase RuvA subunit, C-terminal domain"/>
    <property type="match status" value="1"/>
</dbReference>
<dbReference type="Gene3D" id="2.40.50.140">
    <property type="entry name" value="Nucleic acid-binding proteins"/>
    <property type="match status" value="1"/>
</dbReference>
<dbReference type="HAMAP" id="MF_00031">
    <property type="entry name" value="DNA_HJ_migration_RuvA"/>
    <property type="match status" value="1"/>
</dbReference>
<dbReference type="InterPro" id="IPR013849">
    <property type="entry name" value="DNA_helicase_Holl-junc_RuvA_I"/>
</dbReference>
<dbReference type="InterPro" id="IPR003583">
    <property type="entry name" value="Hlx-hairpin-Hlx_DNA-bd_motif"/>
</dbReference>
<dbReference type="InterPro" id="IPR012340">
    <property type="entry name" value="NA-bd_OB-fold"/>
</dbReference>
<dbReference type="InterPro" id="IPR000085">
    <property type="entry name" value="RuvA"/>
</dbReference>
<dbReference type="InterPro" id="IPR010994">
    <property type="entry name" value="RuvA_2-like"/>
</dbReference>
<dbReference type="InterPro" id="IPR011114">
    <property type="entry name" value="RuvA_C"/>
</dbReference>
<dbReference type="InterPro" id="IPR036267">
    <property type="entry name" value="RuvA_C_sf"/>
</dbReference>
<dbReference type="NCBIfam" id="TIGR00084">
    <property type="entry name" value="ruvA"/>
    <property type="match status" value="1"/>
</dbReference>
<dbReference type="Pfam" id="PF14520">
    <property type="entry name" value="HHH_5"/>
    <property type="match status" value="1"/>
</dbReference>
<dbReference type="Pfam" id="PF07499">
    <property type="entry name" value="RuvA_C"/>
    <property type="match status" value="1"/>
</dbReference>
<dbReference type="Pfam" id="PF01330">
    <property type="entry name" value="RuvA_N"/>
    <property type="match status" value="1"/>
</dbReference>
<dbReference type="SMART" id="SM00278">
    <property type="entry name" value="HhH1"/>
    <property type="match status" value="2"/>
</dbReference>
<dbReference type="SUPFAM" id="SSF46929">
    <property type="entry name" value="DNA helicase RuvA subunit, C-terminal domain"/>
    <property type="match status" value="1"/>
</dbReference>
<dbReference type="SUPFAM" id="SSF50249">
    <property type="entry name" value="Nucleic acid-binding proteins"/>
    <property type="match status" value="1"/>
</dbReference>
<dbReference type="SUPFAM" id="SSF47781">
    <property type="entry name" value="RuvA domain 2-like"/>
    <property type="match status" value="1"/>
</dbReference>
<sequence length="224" mass="23048">MIGKVAGILDFRGPDHVLIDVRGVGYIVYVSDRTLASMPGLGEGVALYTELVVREDLLQLFGFPTMIEKEWHRLLMTVQGVGAKAGMAILGALGAEGTARAITLGDARSIQAAPGIGPKIAQRVVLELKSKAPALMAMGGGTAALAPSEPPEPEPGTSSGSRRKTRAPEPPRPSHTADALSALANLGYQPTDAAQAVAQAAGESPDADTAALIRAALKLLAPKS</sequence>